<proteinExistence type="inferred from homology"/>
<organism>
    <name type="scientific">Staphylococcus aureus (strain bovine RF122 / ET3-1)</name>
    <dbReference type="NCBI Taxonomy" id="273036"/>
    <lineage>
        <taxon>Bacteria</taxon>
        <taxon>Bacillati</taxon>
        <taxon>Bacillota</taxon>
        <taxon>Bacilli</taxon>
        <taxon>Bacillales</taxon>
        <taxon>Staphylococcaceae</taxon>
        <taxon>Staphylococcus</taxon>
    </lineage>
</organism>
<sequence length="240" mass="26095">MNKNVVIKSLATLTILTSVAGIGTTLVEEVQQTAKAENNVTKIKDTNIFPYTGVVAFNSATGFVVGKNTILTNKHVSKNYKVGDRITAHPNSDKSNGGIYSIKKIINYPGKEDVSVIKVEEHAIERGPKGFNFNDNVTPFKYAAGAKAGDRIKVIGYPHPYKNKYVLHESTGPVMSVEGSSIVYSAHTESGNSGSPVLNSNNELVGIHFASDVKNDDNRNAYGVYFTPEIKRFIAENIDK</sequence>
<protein>
    <recommendedName>
        <fullName>Serine protease SplB</fullName>
        <ecNumber>3.4.21.-</ecNumber>
    </recommendedName>
</protein>
<keyword id="KW-0378">Hydrolase</keyword>
<keyword id="KW-0645">Protease</keyword>
<keyword id="KW-0964">Secreted</keyword>
<keyword id="KW-0720">Serine protease</keyword>
<keyword id="KW-0732">Signal</keyword>
<dbReference type="EC" id="3.4.21.-"/>
<dbReference type="EMBL" id="AJ938182">
    <property type="protein sequence ID" value="CAI81361.1"/>
    <property type="molecule type" value="Genomic_DNA"/>
</dbReference>
<dbReference type="RefSeq" id="WP_001039452.1">
    <property type="nucleotide sequence ID" value="NC_007622.1"/>
</dbReference>
<dbReference type="SMR" id="Q2YTM3"/>
<dbReference type="MEROPS" id="S01.282"/>
<dbReference type="KEGG" id="sab:SAB1672c"/>
<dbReference type="HOGENOM" id="CLU_073589_2_0_9"/>
<dbReference type="GO" id="GO:0005576">
    <property type="term" value="C:extracellular region"/>
    <property type="evidence" value="ECO:0007669"/>
    <property type="project" value="UniProtKB-SubCell"/>
</dbReference>
<dbReference type="GO" id="GO:0004252">
    <property type="term" value="F:serine-type endopeptidase activity"/>
    <property type="evidence" value="ECO:0007669"/>
    <property type="project" value="InterPro"/>
</dbReference>
<dbReference type="GO" id="GO:0006508">
    <property type="term" value="P:proteolysis"/>
    <property type="evidence" value="ECO:0007669"/>
    <property type="project" value="UniProtKB-KW"/>
</dbReference>
<dbReference type="Gene3D" id="2.40.10.10">
    <property type="entry name" value="Trypsin-like serine proteases"/>
    <property type="match status" value="2"/>
</dbReference>
<dbReference type="InterPro" id="IPR009003">
    <property type="entry name" value="Peptidase_S1_PA"/>
</dbReference>
<dbReference type="InterPro" id="IPR043504">
    <property type="entry name" value="Peptidase_S1_PA_chymotrypsin"/>
</dbReference>
<dbReference type="InterPro" id="IPR008256">
    <property type="entry name" value="Peptidase_S1B"/>
</dbReference>
<dbReference type="InterPro" id="IPR008353">
    <property type="entry name" value="Peptidase_S1B_tx"/>
</dbReference>
<dbReference type="InterPro" id="IPR001254">
    <property type="entry name" value="Trypsin_dom"/>
</dbReference>
<dbReference type="InterPro" id="IPR028301">
    <property type="entry name" value="V8_his_AS"/>
</dbReference>
<dbReference type="PANTHER" id="PTHR43019:SF23">
    <property type="entry name" value="PROTEASE DO-LIKE 5, CHLOROPLASTIC"/>
    <property type="match status" value="1"/>
</dbReference>
<dbReference type="PANTHER" id="PTHR43019">
    <property type="entry name" value="SERINE ENDOPROTEASE DEGS"/>
    <property type="match status" value="1"/>
</dbReference>
<dbReference type="Pfam" id="PF00089">
    <property type="entry name" value="Trypsin"/>
    <property type="match status" value="1"/>
</dbReference>
<dbReference type="PRINTS" id="PR01774">
    <property type="entry name" value="EXFOLTOXIN"/>
</dbReference>
<dbReference type="PRINTS" id="PR00839">
    <property type="entry name" value="V8PROTEASE"/>
</dbReference>
<dbReference type="SUPFAM" id="SSF50494">
    <property type="entry name" value="Trypsin-like serine proteases"/>
    <property type="match status" value="1"/>
</dbReference>
<dbReference type="PROSITE" id="PS00672">
    <property type="entry name" value="V8_HIS"/>
    <property type="match status" value="1"/>
</dbReference>
<name>SPLB_STAAB</name>
<accession>Q2YTM3</accession>
<comment type="function">
    <text evidence="1">Serine protease that cleaves specifically after the sequence Trp-Glu-Leu-Gln.</text>
</comment>
<comment type="subcellular location">
    <subcellularLocation>
        <location evidence="1">Secreted</location>
    </subcellularLocation>
</comment>
<comment type="similarity">
    <text evidence="3">Belongs to the peptidase S1B family.</text>
</comment>
<evidence type="ECO:0000250" key="1"/>
<evidence type="ECO:0000250" key="2">
    <source>
        <dbReference type="UniProtKB" id="Q2FXC3"/>
    </source>
</evidence>
<evidence type="ECO:0000305" key="3"/>
<reference key="1">
    <citation type="journal article" date="2007" name="PLoS ONE">
        <title>Molecular correlates of host specialization in Staphylococcus aureus.</title>
        <authorList>
            <person name="Herron-Olson L."/>
            <person name="Fitzgerald J.R."/>
            <person name="Musser J.M."/>
            <person name="Kapur V."/>
        </authorList>
    </citation>
    <scope>NUCLEOTIDE SEQUENCE [LARGE SCALE GENOMIC DNA]</scope>
    <source>
        <strain>bovine RF122 / ET3-1</strain>
    </source>
</reference>
<feature type="signal peptide" evidence="1">
    <location>
        <begin position="1"/>
        <end position="36"/>
    </location>
</feature>
<feature type="chain" id="PRO_0000359538" description="Serine protease SplB">
    <location>
        <begin position="37"/>
        <end position="240"/>
    </location>
</feature>
<feature type="active site" description="Charge relay system" evidence="2">
    <location>
        <position position="75"/>
    </location>
</feature>
<feature type="active site" description="Charge relay system" evidence="2">
    <location>
        <position position="113"/>
    </location>
</feature>
<feature type="active site" description="Charge relay system" evidence="2">
    <location>
        <position position="193"/>
    </location>
</feature>
<gene>
    <name type="primary">splB</name>
    <name type="ordered locus">SAB1672c</name>
</gene>